<reference key="1">
    <citation type="journal article" date="2007" name="J. Bacteriol.">
        <title>The complete genome sequence of Roseobacter denitrificans reveals a mixotrophic rather than photosynthetic metabolism.</title>
        <authorList>
            <person name="Swingley W.D."/>
            <person name="Sadekar S."/>
            <person name="Mastrian S.D."/>
            <person name="Matthies H.J."/>
            <person name="Hao J."/>
            <person name="Ramos H."/>
            <person name="Acharya C.R."/>
            <person name="Conrad A.L."/>
            <person name="Taylor H.L."/>
            <person name="Dejesa L.C."/>
            <person name="Shah M.K."/>
            <person name="O'Huallachain M.E."/>
            <person name="Lince M.T."/>
            <person name="Blankenship R.E."/>
            <person name="Beatty J.T."/>
            <person name="Touchman J.W."/>
        </authorList>
    </citation>
    <scope>NUCLEOTIDE SEQUENCE [LARGE SCALE GENOMIC DNA]</scope>
    <source>
        <strain>ATCC 33942 / OCh 114</strain>
    </source>
</reference>
<accession>Q166A0</accession>
<protein>
    <recommendedName>
        <fullName evidence="1">Phosphate import ATP-binding protein PstB</fullName>
        <ecNumber evidence="1">7.3.2.1</ecNumber>
    </recommendedName>
    <alternativeName>
        <fullName evidence="1">ABC phosphate transporter</fullName>
    </alternativeName>
    <alternativeName>
        <fullName evidence="1">Phosphate-transporting ATPase</fullName>
    </alternativeName>
</protein>
<comment type="function">
    <text evidence="1">Part of the ABC transporter complex PstSACB involved in phosphate import. Responsible for energy coupling to the transport system.</text>
</comment>
<comment type="catalytic activity">
    <reaction evidence="1">
        <text>phosphate(out) + ATP + H2O = ADP + 2 phosphate(in) + H(+)</text>
        <dbReference type="Rhea" id="RHEA:24440"/>
        <dbReference type="ChEBI" id="CHEBI:15377"/>
        <dbReference type="ChEBI" id="CHEBI:15378"/>
        <dbReference type="ChEBI" id="CHEBI:30616"/>
        <dbReference type="ChEBI" id="CHEBI:43474"/>
        <dbReference type="ChEBI" id="CHEBI:456216"/>
        <dbReference type="EC" id="7.3.2.1"/>
    </reaction>
</comment>
<comment type="subunit">
    <text evidence="1">The complex is composed of two ATP-binding proteins (PstB), two transmembrane proteins (PstC and PstA) and a solute-binding protein (PstS).</text>
</comment>
<comment type="subcellular location">
    <subcellularLocation>
        <location evidence="1">Cell inner membrane</location>
        <topology evidence="1">Peripheral membrane protein</topology>
    </subcellularLocation>
</comment>
<comment type="similarity">
    <text evidence="1">Belongs to the ABC transporter superfamily. Phosphate importer (TC 3.A.1.7) family.</text>
</comment>
<organism>
    <name type="scientific">Roseobacter denitrificans (strain ATCC 33942 / OCh 114)</name>
    <name type="common">Erythrobacter sp. (strain OCh 114)</name>
    <name type="synonym">Roseobacter denitrificans</name>
    <dbReference type="NCBI Taxonomy" id="375451"/>
    <lineage>
        <taxon>Bacteria</taxon>
        <taxon>Pseudomonadati</taxon>
        <taxon>Pseudomonadota</taxon>
        <taxon>Alphaproteobacteria</taxon>
        <taxon>Rhodobacterales</taxon>
        <taxon>Roseobacteraceae</taxon>
        <taxon>Roseobacter</taxon>
    </lineage>
</organism>
<keyword id="KW-0067">ATP-binding</keyword>
<keyword id="KW-0997">Cell inner membrane</keyword>
<keyword id="KW-1003">Cell membrane</keyword>
<keyword id="KW-0472">Membrane</keyword>
<keyword id="KW-0547">Nucleotide-binding</keyword>
<keyword id="KW-0592">Phosphate transport</keyword>
<keyword id="KW-1185">Reference proteome</keyword>
<keyword id="KW-1278">Translocase</keyword>
<keyword id="KW-0813">Transport</keyword>
<proteinExistence type="inferred from homology"/>
<evidence type="ECO:0000255" key="1">
    <source>
        <dbReference type="HAMAP-Rule" id="MF_01702"/>
    </source>
</evidence>
<feature type="chain" id="PRO_0000272517" description="Phosphate import ATP-binding protein PstB">
    <location>
        <begin position="1"/>
        <end position="265"/>
    </location>
</feature>
<feature type="domain" description="ABC transporter" evidence="1">
    <location>
        <begin position="18"/>
        <end position="260"/>
    </location>
</feature>
<feature type="binding site" evidence="1">
    <location>
        <begin position="50"/>
        <end position="57"/>
    </location>
    <ligand>
        <name>ATP</name>
        <dbReference type="ChEBI" id="CHEBI:30616"/>
    </ligand>
</feature>
<gene>
    <name evidence="1" type="primary">pstB</name>
    <name type="ordered locus">RD1_2646</name>
</gene>
<sequence>MNDMRILERDVDAKAIKISARDVQVFYGDNHAIKDVNVEIQDKTVTAFIGPSGCGKSTFLRCLNRMNDTIDVCRVQGRITIDGEDIYDKRVDPVQLRAKVGMVFQKPNPFPKSIYDNVAYGPRIHGLAQNKAELDNLVENSLRRAALWGEVKDRLGAPGTGLSGGQQQRLCIARAVATQPEVLLMDEPCSALDPIATAQVEELIDDLRQNYSVVIVTHSMQQAARVSQKTAFFHLGNLVEYGETGTIFTNPEDPRTESYITGRIG</sequence>
<dbReference type="EC" id="7.3.2.1" evidence="1"/>
<dbReference type="EMBL" id="CP000362">
    <property type="protein sequence ID" value="ABG32193.1"/>
    <property type="molecule type" value="Genomic_DNA"/>
</dbReference>
<dbReference type="RefSeq" id="WP_011568810.1">
    <property type="nucleotide sequence ID" value="NC_008209.1"/>
</dbReference>
<dbReference type="SMR" id="Q166A0"/>
<dbReference type="STRING" id="375451.RD1_2646"/>
<dbReference type="KEGG" id="rde:RD1_2646"/>
<dbReference type="eggNOG" id="COG1117">
    <property type="taxonomic scope" value="Bacteria"/>
</dbReference>
<dbReference type="HOGENOM" id="CLU_000604_1_22_5"/>
<dbReference type="OrthoDB" id="9802264at2"/>
<dbReference type="Proteomes" id="UP000007029">
    <property type="component" value="Chromosome"/>
</dbReference>
<dbReference type="GO" id="GO:0005886">
    <property type="term" value="C:plasma membrane"/>
    <property type="evidence" value="ECO:0007669"/>
    <property type="project" value="UniProtKB-SubCell"/>
</dbReference>
<dbReference type="GO" id="GO:0005524">
    <property type="term" value="F:ATP binding"/>
    <property type="evidence" value="ECO:0007669"/>
    <property type="project" value="UniProtKB-KW"/>
</dbReference>
<dbReference type="GO" id="GO:0016887">
    <property type="term" value="F:ATP hydrolysis activity"/>
    <property type="evidence" value="ECO:0007669"/>
    <property type="project" value="InterPro"/>
</dbReference>
<dbReference type="GO" id="GO:0015415">
    <property type="term" value="F:ATPase-coupled phosphate ion transmembrane transporter activity"/>
    <property type="evidence" value="ECO:0007669"/>
    <property type="project" value="UniProtKB-EC"/>
</dbReference>
<dbReference type="GO" id="GO:0035435">
    <property type="term" value="P:phosphate ion transmembrane transport"/>
    <property type="evidence" value="ECO:0007669"/>
    <property type="project" value="InterPro"/>
</dbReference>
<dbReference type="CDD" id="cd03260">
    <property type="entry name" value="ABC_PstB_phosphate_transporter"/>
    <property type="match status" value="1"/>
</dbReference>
<dbReference type="Gene3D" id="3.40.50.300">
    <property type="entry name" value="P-loop containing nucleotide triphosphate hydrolases"/>
    <property type="match status" value="1"/>
</dbReference>
<dbReference type="InterPro" id="IPR003593">
    <property type="entry name" value="AAA+_ATPase"/>
</dbReference>
<dbReference type="InterPro" id="IPR003439">
    <property type="entry name" value="ABC_transporter-like_ATP-bd"/>
</dbReference>
<dbReference type="InterPro" id="IPR017871">
    <property type="entry name" value="ABC_transporter-like_CS"/>
</dbReference>
<dbReference type="InterPro" id="IPR027417">
    <property type="entry name" value="P-loop_NTPase"/>
</dbReference>
<dbReference type="InterPro" id="IPR005670">
    <property type="entry name" value="PstB-like"/>
</dbReference>
<dbReference type="NCBIfam" id="TIGR00972">
    <property type="entry name" value="3a0107s01c2"/>
    <property type="match status" value="1"/>
</dbReference>
<dbReference type="PANTHER" id="PTHR43423">
    <property type="entry name" value="ABC TRANSPORTER I FAMILY MEMBER 17"/>
    <property type="match status" value="1"/>
</dbReference>
<dbReference type="PANTHER" id="PTHR43423:SF1">
    <property type="entry name" value="ABC TRANSPORTER I FAMILY MEMBER 17"/>
    <property type="match status" value="1"/>
</dbReference>
<dbReference type="Pfam" id="PF00005">
    <property type="entry name" value="ABC_tran"/>
    <property type="match status" value="1"/>
</dbReference>
<dbReference type="SMART" id="SM00382">
    <property type="entry name" value="AAA"/>
    <property type="match status" value="1"/>
</dbReference>
<dbReference type="SUPFAM" id="SSF52540">
    <property type="entry name" value="P-loop containing nucleoside triphosphate hydrolases"/>
    <property type="match status" value="1"/>
</dbReference>
<dbReference type="PROSITE" id="PS00211">
    <property type="entry name" value="ABC_TRANSPORTER_1"/>
    <property type="match status" value="1"/>
</dbReference>
<dbReference type="PROSITE" id="PS50893">
    <property type="entry name" value="ABC_TRANSPORTER_2"/>
    <property type="match status" value="1"/>
</dbReference>
<dbReference type="PROSITE" id="PS51238">
    <property type="entry name" value="PSTB"/>
    <property type="match status" value="1"/>
</dbReference>
<name>PSTB_ROSDO</name>